<evidence type="ECO:0000255" key="1"/>
<dbReference type="EMBL" id="AE000520">
    <property type="protein sequence ID" value="AAC65820.1"/>
    <property type="molecule type" value="Genomic_DNA"/>
</dbReference>
<dbReference type="PIR" id="G71273">
    <property type="entry name" value="G71273"/>
</dbReference>
<dbReference type="RefSeq" id="WP_010882291.1">
    <property type="nucleotide sequence ID" value="NC_000919.1"/>
</dbReference>
<dbReference type="IntAct" id="O83819">
    <property type="interactions" value="2"/>
</dbReference>
<dbReference type="STRING" id="243276.TP_0847"/>
<dbReference type="EnsemblBacteria" id="AAC65820">
    <property type="protein sequence ID" value="AAC65820"/>
    <property type="gene ID" value="TP_0847"/>
</dbReference>
<dbReference type="KEGG" id="tpa:TP_0847"/>
<dbReference type="eggNOG" id="ENOG502ZM78">
    <property type="taxonomic scope" value="Bacteria"/>
</dbReference>
<dbReference type="HOGENOM" id="CLU_2157263_0_0_12"/>
<dbReference type="OrthoDB" id="363240at2"/>
<dbReference type="Proteomes" id="UP000000811">
    <property type="component" value="Chromosome"/>
</dbReference>
<dbReference type="GO" id="GO:0005737">
    <property type="term" value="C:cytoplasm"/>
    <property type="evidence" value="ECO:0007669"/>
    <property type="project" value="InterPro"/>
</dbReference>
<dbReference type="GO" id="GO:0090529">
    <property type="term" value="P:cell septum assembly"/>
    <property type="evidence" value="ECO:0007669"/>
    <property type="project" value="InterPro"/>
</dbReference>
<dbReference type="GO" id="GO:0043093">
    <property type="term" value="P:FtsZ-dependent cytokinesis"/>
    <property type="evidence" value="ECO:0007669"/>
    <property type="project" value="InterPro"/>
</dbReference>
<dbReference type="InterPro" id="IPR009252">
    <property type="entry name" value="Cell_div_ZapB"/>
</dbReference>
<dbReference type="Pfam" id="PF06005">
    <property type="entry name" value="ZapB"/>
    <property type="match status" value="1"/>
</dbReference>
<feature type="chain" id="PRO_0000202338" description="Uncharacterized protein TP_0847">
    <location>
        <begin position="1"/>
        <end position="111"/>
    </location>
</feature>
<feature type="coiled-coil region" evidence="1">
    <location>
        <begin position="4"/>
        <end position="51"/>
    </location>
</feature>
<proteinExistence type="predicted"/>
<accession>O83819</accession>
<organism>
    <name type="scientific">Treponema pallidum (strain Nichols)</name>
    <dbReference type="NCBI Taxonomy" id="243276"/>
    <lineage>
        <taxon>Bacteria</taxon>
        <taxon>Pseudomonadati</taxon>
        <taxon>Spirochaetota</taxon>
        <taxon>Spirochaetia</taxon>
        <taxon>Spirochaetales</taxon>
        <taxon>Treponemataceae</taxon>
        <taxon>Treponema</taxon>
    </lineage>
</organism>
<name>Y847_TREPA</name>
<gene>
    <name type="ordered locus">TP_0847</name>
</gene>
<reference key="1">
    <citation type="journal article" date="1998" name="Science">
        <title>Complete genome sequence of Treponema pallidum, the syphilis spirochete.</title>
        <authorList>
            <person name="Fraser C.M."/>
            <person name="Norris S.J."/>
            <person name="Weinstock G.M."/>
            <person name="White O."/>
            <person name="Sutton G.G."/>
            <person name="Dodson R.J."/>
            <person name="Gwinn M.L."/>
            <person name="Hickey E.K."/>
            <person name="Clayton R.A."/>
            <person name="Ketchum K.A."/>
            <person name="Sodergren E."/>
            <person name="Hardham J.M."/>
            <person name="McLeod M.P."/>
            <person name="Salzberg S.L."/>
            <person name="Peterson J.D."/>
            <person name="Khalak H.G."/>
            <person name="Richardson D.L."/>
            <person name="Howell J.K."/>
            <person name="Chidambaram M."/>
            <person name="Utterback T.R."/>
            <person name="McDonald L.A."/>
            <person name="Artiach P."/>
            <person name="Bowman C."/>
            <person name="Cotton M.D."/>
            <person name="Fujii C."/>
            <person name="Garland S.A."/>
            <person name="Hatch B."/>
            <person name="Horst K."/>
            <person name="Roberts K.M."/>
            <person name="Sandusky M."/>
            <person name="Weidman J.F."/>
            <person name="Smith H.O."/>
            <person name="Venter J.C."/>
        </authorList>
    </citation>
    <scope>NUCLEOTIDE SEQUENCE [LARGE SCALE GENOMIC DNA]</scope>
    <source>
        <strain>Nichols</strain>
    </source>
</reference>
<sequence>MLNLGQVKVLEEKVAKAVHLVQMLKEENAALRAEIDGRGKRITELEQLVLXFQDDQTKIEEGILKALNHLSTFEDSAYGEALTQHAAKVLENREHAGLSEELTSRTQMEIF</sequence>
<protein>
    <recommendedName>
        <fullName>Uncharacterized protein TP_0847</fullName>
    </recommendedName>
</protein>
<keyword id="KW-0175">Coiled coil</keyword>
<keyword id="KW-1185">Reference proteome</keyword>